<comment type="similarity">
    <text evidence="1">Belongs to the bacterial ribosomal protein bL36 family.</text>
</comment>
<evidence type="ECO:0000255" key="1">
    <source>
        <dbReference type="HAMAP-Rule" id="MF_00251"/>
    </source>
</evidence>
<evidence type="ECO:0000305" key="2"/>
<reference key="1">
    <citation type="journal article" date="2006" name="Proc. Natl. Acad. Sci. U.S.A.">
        <title>Molecular genetic anatomy of inter- and intraserotype variation in the human bacterial pathogen group A Streptococcus.</title>
        <authorList>
            <person name="Beres S.B."/>
            <person name="Richter E.W."/>
            <person name="Nagiec M.J."/>
            <person name="Sumby P."/>
            <person name="Porcella S.F."/>
            <person name="DeLeo F.R."/>
            <person name="Musser J.M."/>
        </authorList>
    </citation>
    <scope>NUCLEOTIDE SEQUENCE [LARGE SCALE GENOMIC DNA]</scope>
    <source>
        <strain>MGAS2096</strain>
    </source>
</reference>
<organism>
    <name type="scientific">Streptococcus pyogenes serotype M12 (strain MGAS2096)</name>
    <dbReference type="NCBI Taxonomy" id="370553"/>
    <lineage>
        <taxon>Bacteria</taxon>
        <taxon>Bacillati</taxon>
        <taxon>Bacillota</taxon>
        <taxon>Bacilli</taxon>
        <taxon>Lactobacillales</taxon>
        <taxon>Streptococcaceae</taxon>
        <taxon>Streptococcus</taxon>
    </lineage>
</organism>
<gene>
    <name evidence="1" type="primary">rpmJ</name>
    <name type="ordered locus">MGAS2096_Spy0070</name>
</gene>
<keyword id="KW-0687">Ribonucleoprotein</keyword>
<keyword id="KW-0689">Ribosomal protein</keyword>
<sequence>MKVRPSVKPICEYCKVIRRNGRVMVICPTNPKHKQRQG</sequence>
<accession>Q1JE36</accession>
<feature type="chain" id="PRO_0000302307" description="Large ribosomal subunit protein bL36">
    <location>
        <begin position="1"/>
        <end position="38"/>
    </location>
</feature>
<dbReference type="EMBL" id="CP000261">
    <property type="protein sequence ID" value="ABF35122.1"/>
    <property type="molecule type" value="Genomic_DNA"/>
</dbReference>
<dbReference type="SMR" id="Q1JE36"/>
<dbReference type="KEGG" id="spj:MGAS2096_Spy0070"/>
<dbReference type="HOGENOM" id="CLU_135723_6_2_9"/>
<dbReference type="GO" id="GO:0005737">
    <property type="term" value="C:cytoplasm"/>
    <property type="evidence" value="ECO:0007669"/>
    <property type="project" value="UniProtKB-ARBA"/>
</dbReference>
<dbReference type="GO" id="GO:1990904">
    <property type="term" value="C:ribonucleoprotein complex"/>
    <property type="evidence" value="ECO:0007669"/>
    <property type="project" value="UniProtKB-KW"/>
</dbReference>
<dbReference type="GO" id="GO:0005840">
    <property type="term" value="C:ribosome"/>
    <property type="evidence" value="ECO:0007669"/>
    <property type="project" value="UniProtKB-KW"/>
</dbReference>
<dbReference type="GO" id="GO:0003735">
    <property type="term" value="F:structural constituent of ribosome"/>
    <property type="evidence" value="ECO:0007669"/>
    <property type="project" value="InterPro"/>
</dbReference>
<dbReference type="GO" id="GO:0006412">
    <property type="term" value="P:translation"/>
    <property type="evidence" value="ECO:0007669"/>
    <property type="project" value="UniProtKB-UniRule"/>
</dbReference>
<dbReference type="HAMAP" id="MF_00251">
    <property type="entry name" value="Ribosomal_bL36"/>
    <property type="match status" value="1"/>
</dbReference>
<dbReference type="InterPro" id="IPR000473">
    <property type="entry name" value="Ribosomal_bL36"/>
</dbReference>
<dbReference type="InterPro" id="IPR035977">
    <property type="entry name" value="Ribosomal_bL36_sp"/>
</dbReference>
<dbReference type="NCBIfam" id="TIGR01022">
    <property type="entry name" value="rpmJ_bact"/>
    <property type="match status" value="1"/>
</dbReference>
<dbReference type="PANTHER" id="PTHR42888">
    <property type="entry name" value="50S RIBOSOMAL PROTEIN L36, CHLOROPLASTIC"/>
    <property type="match status" value="1"/>
</dbReference>
<dbReference type="PANTHER" id="PTHR42888:SF1">
    <property type="entry name" value="LARGE RIBOSOMAL SUBUNIT PROTEIN BL36C"/>
    <property type="match status" value="1"/>
</dbReference>
<dbReference type="Pfam" id="PF00444">
    <property type="entry name" value="Ribosomal_L36"/>
    <property type="match status" value="1"/>
</dbReference>
<dbReference type="SUPFAM" id="SSF57840">
    <property type="entry name" value="Ribosomal protein L36"/>
    <property type="match status" value="1"/>
</dbReference>
<dbReference type="PROSITE" id="PS00828">
    <property type="entry name" value="RIBOSOMAL_L36"/>
    <property type="match status" value="1"/>
</dbReference>
<proteinExistence type="inferred from homology"/>
<protein>
    <recommendedName>
        <fullName evidence="1">Large ribosomal subunit protein bL36</fullName>
    </recommendedName>
    <alternativeName>
        <fullName evidence="2">50S ribosomal protein L36</fullName>
    </alternativeName>
</protein>
<name>RL36_STRPB</name>